<sequence length="36" mass="4051">IACAPRGLLCFRDKECCKGLTCKGRFVNTWPTFCLV</sequence>
<comment type="function">
    <text evidence="3">Neurotoxin. Causes spastic paralysis and death in mice. Moderate inhibitor of L-type calcium channels (Cav1/CACNA1).</text>
</comment>
<comment type="subcellular location">
    <subcellularLocation>
        <location evidence="2 3 4">Secreted</location>
    </subcellularLocation>
</comment>
<comment type="tissue specificity">
    <text evidence="2 3 4">Expressed by the venom gland.</text>
</comment>
<comment type="domain">
    <text evidence="1">The presence of a 'disulfide through disulfide knot' structurally defines this protein as a knottin.</text>
</comment>
<comment type="mass spectrometry" mass="4043.64" error="0.22" method="Electrospray" evidence="3 4"/>
<comment type="mass spectrometry" mass="4043.6" method="Unknown" evidence="2 4"/>
<comment type="similarity">
    <text evidence="4">Belongs to the neurotoxin 10 (Hwtx-1) family. 53 (PNTx27C4) subfamily.</text>
</comment>
<accession>P83892</accession>
<evidence type="ECO:0000250" key="1"/>
<evidence type="ECO:0000269" key="2">
    <source>
    </source>
</evidence>
<evidence type="ECO:0000269" key="3">
    <source ref="2"/>
</evidence>
<evidence type="ECO:0000305" key="4"/>
<feature type="peptide" id="PRO_0000044978" description="U4-ctenitoxin-Pr1a">
    <location>
        <begin position="1"/>
        <end position="36"/>
    </location>
</feature>
<feature type="disulfide bond" evidence="1">
    <location>
        <begin position="3"/>
        <end position="17"/>
    </location>
</feature>
<feature type="disulfide bond" evidence="1">
    <location>
        <begin position="10"/>
        <end position="22"/>
    </location>
</feature>
<feature type="disulfide bond" evidence="1">
    <location>
        <begin position="16"/>
        <end position="34"/>
    </location>
</feature>
<organism evidence="4">
    <name type="scientific">Phoneutria reidyi</name>
    <name type="common">Brazilian Amazonian armed spider</name>
    <name type="synonym">Ctenus reidyi</name>
    <dbReference type="NCBI Taxonomy" id="272752"/>
    <lineage>
        <taxon>Eukaryota</taxon>
        <taxon>Metazoa</taxon>
        <taxon>Ecdysozoa</taxon>
        <taxon>Arthropoda</taxon>
        <taxon>Chelicerata</taxon>
        <taxon>Arachnida</taxon>
        <taxon>Araneae</taxon>
        <taxon>Araneomorphae</taxon>
        <taxon>Entelegynae</taxon>
        <taxon>Lycosoidea</taxon>
        <taxon>Ctenidae</taxon>
        <taxon>Phoneutria</taxon>
    </lineage>
</organism>
<keyword id="KW-0108">Calcium channel impairing toxin</keyword>
<keyword id="KW-0903">Direct protein sequencing</keyword>
<keyword id="KW-1015">Disulfide bond</keyword>
<keyword id="KW-0872">Ion channel impairing toxin</keyword>
<keyword id="KW-0960">Knottin</keyword>
<keyword id="KW-0528">Neurotoxin</keyword>
<keyword id="KW-0964">Secreted</keyword>
<keyword id="KW-0800">Toxin</keyword>
<keyword id="KW-1218">Voltage-gated calcium channel impairing toxin</keyword>
<reference key="1">
    <citation type="journal article" date="2006" name="Comp. Biochem. Physiol.">
        <title>Comparison of the partial proteomes of the venoms of Brazilian spiders of the genus Phoneutria.</title>
        <authorList>
            <person name="Richardson M."/>
            <person name="Pimenta A.M."/>
            <person name="Bemquerer M.P."/>
            <person name="Santoro M.M."/>
            <person name="Beirao P.S."/>
            <person name="Lima M.E."/>
            <person name="Figueiredo S.G."/>
            <person name="Bloch C. Jr."/>
            <person name="Vasconcelos E.A."/>
            <person name="Campos F.A."/>
            <person name="Gomes P.C."/>
            <person name="Cordeiro M.N."/>
        </authorList>
    </citation>
    <scope>PROTEIN SEQUENCE</scope>
    <scope>SUBCELLULAR LOCATION</scope>
    <scope>TISSUE SPECIFICITY</scope>
    <scope>MASS SPECTROMETRY</scope>
    <source>
        <tissue>Venom</tissue>
    </source>
</reference>
<reference key="2">
    <citation type="journal article" date="2008" name="Protein Pept. Lett.">
        <title>A new family of small (4kDa) neurotoxins from the venoms of spiders of the genus Poneutria.</title>
        <authorList>
            <person name="Lucio A.D."/>
            <person name="Champos F.V."/>
            <person name="Richardson M."/>
            <person name="Cordeiro M.N."/>
            <person name="Mazzoni M.S.C."/>
            <person name="de Lima M.E."/>
            <person name="Pimenta A.M.C."/>
            <person name="Bemquerer M.P."/>
            <person name="Figueiredo S.G."/>
            <person name="Gomes P.C."/>
            <person name="Beirao P.S.L."/>
        </authorList>
    </citation>
    <scope>PROTEIN SEQUENCE</scope>
    <scope>FUNCTION</scope>
    <scope>SUBCELLULAR LOCATION</scope>
    <scope>TISSUE SPECIFICITY</scope>
    <scope>MASS SPECTROMETRY</scope>
    <source>
        <tissue>Venom</tissue>
    </source>
</reference>
<name>TX27_PHORI</name>
<dbReference type="SMR" id="P83892"/>
<dbReference type="ArachnoServer" id="AS000245">
    <property type="toxin name" value="U4-ctenitoxin-Pr1a"/>
</dbReference>
<dbReference type="GO" id="GO:0005576">
    <property type="term" value="C:extracellular region"/>
    <property type="evidence" value="ECO:0007669"/>
    <property type="project" value="UniProtKB-SubCell"/>
</dbReference>
<dbReference type="GO" id="GO:0005246">
    <property type="term" value="F:calcium channel regulator activity"/>
    <property type="evidence" value="ECO:0007669"/>
    <property type="project" value="UniProtKB-KW"/>
</dbReference>
<dbReference type="GO" id="GO:0008200">
    <property type="term" value="F:ion channel inhibitor activity"/>
    <property type="evidence" value="ECO:0007669"/>
    <property type="project" value="InterPro"/>
</dbReference>
<dbReference type="GO" id="GO:0090729">
    <property type="term" value="F:toxin activity"/>
    <property type="evidence" value="ECO:0007669"/>
    <property type="project" value="UniProtKB-KW"/>
</dbReference>
<dbReference type="InterPro" id="IPR011696">
    <property type="entry name" value="Huwentoxin-1"/>
</dbReference>
<dbReference type="Pfam" id="PF07740">
    <property type="entry name" value="Toxin_12"/>
    <property type="match status" value="1"/>
</dbReference>
<proteinExistence type="evidence at protein level"/>
<protein>
    <recommendedName>
        <fullName>U4-ctenitoxin-Pr1a</fullName>
        <shortName>U4-CNTX-Pr1a</shortName>
    </recommendedName>
    <alternativeName>
        <fullName>Neurotoxin PRTx27C3</fullName>
    </alternativeName>
</protein>